<protein>
    <recommendedName>
        <fullName evidence="3">2-methyl-aconitate isomerase</fullName>
        <ecNumber evidence="2">5.3.3.-</ecNumber>
    </recommendedName>
    <alternativeName>
        <fullName evidence="3">Cis-trans isomerase</fullName>
    </alternativeName>
</protein>
<comment type="function">
    <text evidence="2">Catalyzes the isomerization of 2-methyl-trans-aconitate to yield 2-methyl-cis-aconitate through a base-catalyzed proton abstraction coupled with a rotation about C2-C3 bond of 2-methyl-aconitate.</text>
</comment>
<comment type="catalytic activity">
    <reaction evidence="2">
        <text>2-methyl-trans-aconitate = 2-methyl-cis-aconitate</text>
        <dbReference type="Rhea" id="RHEA:37751"/>
        <dbReference type="ChEBI" id="CHEBI:57872"/>
        <dbReference type="ChEBI" id="CHEBI:58915"/>
    </reaction>
</comment>
<comment type="pathway">
    <text evidence="5">Organic acid metabolism; propanoate degradation.</text>
</comment>
<comment type="subunit">
    <text evidence="1">Homodimer.</text>
</comment>
<comment type="miscellaneous">
    <text evidence="5">Could be involved in the catabolism of short chain fatty acids (SCFA) via the 2-methylcitrate cycle II (propionate degradation route), however it does not have a 2-methylcitrate dehydratase able to produce 2-methyl-trans-aconitate.</text>
</comment>
<comment type="similarity">
    <text evidence="4">Belongs to the PrpF family.</text>
</comment>
<name>PRPF_CUPNE</name>
<proteinExistence type="evidence at protein level"/>
<accession>Q937N7</accession>
<dbReference type="EC" id="5.3.3.-" evidence="2"/>
<dbReference type="EMBL" id="AF325554">
    <property type="protein sequence ID" value="AAL03991.1"/>
    <property type="molecule type" value="Genomic_DNA"/>
</dbReference>
<dbReference type="SMR" id="Q937N7"/>
<dbReference type="UniPathway" id="UPA00946"/>
<dbReference type="GO" id="GO:0016863">
    <property type="term" value="F:intramolecular oxidoreductase activity, transposing C=C bonds"/>
    <property type="evidence" value="ECO:0000314"/>
    <property type="project" value="UniProtKB"/>
</dbReference>
<dbReference type="GO" id="GO:0019629">
    <property type="term" value="P:propionate catabolic process, 2-methylcitrate cycle"/>
    <property type="evidence" value="ECO:0000314"/>
    <property type="project" value="UniProtKB"/>
</dbReference>
<dbReference type="FunFam" id="3.10.310.10:FF:000038">
    <property type="entry name" value="2-methyl-aconitate isomerase"/>
    <property type="match status" value="1"/>
</dbReference>
<dbReference type="FunFam" id="3.10.310.10:FF:000018">
    <property type="entry name" value="2-methylaconitate cis-trans isomerase"/>
    <property type="match status" value="1"/>
</dbReference>
<dbReference type="Gene3D" id="3.10.310.10">
    <property type="entry name" value="Diaminopimelate Epimerase, Chain A, domain 1"/>
    <property type="match status" value="2"/>
</dbReference>
<dbReference type="InterPro" id="IPR012709">
    <property type="entry name" value="PrpF"/>
</dbReference>
<dbReference type="InterPro" id="IPR007400">
    <property type="entry name" value="PrpF-like"/>
</dbReference>
<dbReference type="NCBIfam" id="TIGR02334">
    <property type="entry name" value="prpF"/>
    <property type="match status" value="1"/>
</dbReference>
<dbReference type="PANTHER" id="PTHR43709">
    <property type="entry name" value="ACONITATE ISOMERASE-RELATED"/>
    <property type="match status" value="1"/>
</dbReference>
<dbReference type="PANTHER" id="PTHR43709:SF2">
    <property type="entry name" value="DUF453 DOMAIN PROTEIN (AFU_ORTHOLOGUE AFUA_6G00360)"/>
    <property type="match status" value="1"/>
</dbReference>
<dbReference type="Pfam" id="PF04303">
    <property type="entry name" value="PrpF"/>
    <property type="match status" value="1"/>
</dbReference>
<dbReference type="SUPFAM" id="SSF54506">
    <property type="entry name" value="Diaminopimelate epimerase-like"/>
    <property type="match status" value="2"/>
</dbReference>
<feature type="chain" id="PRO_0000432937" description="2-methyl-aconitate isomerase">
    <location>
        <begin position="1"/>
        <end position="396"/>
    </location>
</feature>
<feature type="active site" description="Proton donor/acceptor" evidence="1">
    <location>
        <position position="104"/>
    </location>
</feature>
<feature type="active site" description="Proton donor/acceptor" evidence="1">
    <location>
        <position position="318"/>
    </location>
</feature>
<feature type="binding site" evidence="1">
    <location>
        <position position="19"/>
    </location>
    <ligand>
        <name>substrate</name>
    </ligand>
</feature>
<feature type="binding site" evidence="1">
    <location>
        <begin position="66"/>
        <end position="70"/>
    </location>
    <ligand>
        <name>substrate</name>
    </ligand>
</feature>
<feature type="binding site" evidence="1">
    <location>
        <position position="106"/>
    </location>
    <ligand>
        <name>substrate</name>
    </ligand>
</feature>
<feature type="binding site" evidence="1">
    <location>
        <position position="278"/>
    </location>
    <ligand>
        <name>substrate</name>
    </ligand>
</feature>
<feature type="binding site" evidence="1">
    <location>
        <position position="309"/>
    </location>
    <ligand>
        <name>substrate</name>
    </ligand>
</feature>
<feature type="binding site" evidence="1">
    <location>
        <position position="314"/>
    </location>
    <ligand>
        <name>substrate</name>
    </ligand>
</feature>
<feature type="binding site" evidence="1">
    <location>
        <position position="319"/>
    </location>
    <ligand>
        <name>substrate</name>
    </ligand>
</feature>
<feature type="modified residue" description="Cysteine sulfinic acid (-SO2H)" evidence="1">
    <location>
        <position position="104"/>
    </location>
</feature>
<keyword id="KW-0413">Isomerase</keyword>
<keyword id="KW-0558">Oxidation</keyword>
<organism>
    <name type="scientific">Cupriavidus necator</name>
    <name type="common">Alcaligenes eutrophus</name>
    <name type="synonym">Ralstonia eutropha</name>
    <dbReference type="NCBI Taxonomy" id="106590"/>
    <lineage>
        <taxon>Bacteria</taxon>
        <taxon>Pseudomonadati</taxon>
        <taxon>Pseudomonadota</taxon>
        <taxon>Betaproteobacteria</taxon>
        <taxon>Burkholderiales</taxon>
        <taxon>Burkholderiaceae</taxon>
        <taxon>Cupriavidus</taxon>
    </lineage>
</organism>
<sequence length="396" mass="41514">MTHVPQIKIPATYIRGGTSKGVFFRLQDLPETAQVPGPARDALLMRVIGSPDPYGKQIDGMGAATSSTSKTVILSKSTRPDHDVDYLFGQVSIDQPFVDWSGNCGNLSAAVGPFAISAGLVDASRIPHNGVAVVRIWQANIGKTIIGHVPVTNGEVQETGDFELDGVTFPAAEVQLEFMDPAAEEEGAGGAMFPTGNVVDDLEVPAVGTLKATMINAGIPTIFVNAESIGYTGTELQDAINSDTRALAMFEDHPCYGALRMGLIKNVDEAAKRQHTPKVAFVRQAGDYVASSGKKVAAADVDLLVRALSMGKLHHAMMGTAAVAIGTAAAIPGTLVNLAAGGGERNAVRFGHPSGTLRVGAEAQQVDGEWAVKKAIMSRSARVLMEGWVRVPGDAF</sequence>
<evidence type="ECO:0000250" key="1">
    <source>
        <dbReference type="UniProtKB" id="Q8EJW4"/>
    </source>
</evidence>
<evidence type="ECO:0000269" key="2">
    <source>
    </source>
</evidence>
<evidence type="ECO:0000303" key="3">
    <source>
    </source>
</evidence>
<evidence type="ECO:0000305" key="4"/>
<evidence type="ECO:0000305" key="5">
    <source>
    </source>
</evidence>
<reference key="1">
    <citation type="journal article" date="2001" name="Microbiology">
        <title>The methylcitric acid pathway in Ralstonia eutropha: new genes identified involved in propionate metabolism.</title>
        <authorList>
            <person name="Bramer C.O."/>
            <person name="Steinbuchel A."/>
        </authorList>
    </citation>
    <scope>NUCLEOTIDE SEQUENCE [GENOMIC DNA]</scope>
    <scope>FUNCTION</scope>
    <scope>CATALYTIC ACTIVITY</scope>
    <source>
        <strain>HF39</strain>
    </source>
</reference>